<organism>
    <name type="scientific">Homo sapiens</name>
    <name type="common">Human</name>
    <dbReference type="NCBI Taxonomy" id="9606"/>
    <lineage>
        <taxon>Eukaryota</taxon>
        <taxon>Metazoa</taxon>
        <taxon>Chordata</taxon>
        <taxon>Craniata</taxon>
        <taxon>Vertebrata</taxon>
        <taxon>Euteleostomi</taxon>
        <taxon>Mammalia</taxon>
        <taxon>Eutheria</taxon>
        <taxon>Euarchontoglires</taxon>
        <taxon>Primates</taxon>
        <taxon>Haplorrhini</taxon>
        <taxon>Catarrhini</taxon>
        <taxon>Hominidae</taxon>
        <taxon>Homo</taxon>
    </lineage>
</organism>
<feature type="chain" id="PRO_0000050821" description="HEAT repeat-containing protein 3">
    <location>
        <begin position="1"/>
        <end position="680"/>
    </location>
</feature>
<feature type="repeat" description="HEAT 1">
    <location>
        <begin position="38"/>
        <end position="69"/>
    </location>
</feature>
<feature type="repeat" description="HEAT 2">
    <location>
        <begin position="74"/>
        <end position="110"/>
    </location>
</feature>
<feature type="region of interest" description="Disordered" evidence="2">
    <location>
        <begin position="1"/>
        <end position="39"/>
    </location>
</feature>
<feature type="compositionally biased region" description="Basic residues" evidence="2">
    <location>
        <begin position="1"/>
        <end position="11"/>
    </location>
</feature>
<feature type="compositionally biased region" description="Low complexity" evidence="2">
    <location>
        <begin position="18"/>
        <end position="29"/>
    </location>
</feature>
<feature type="modified residue" description="Phosphoserine" evidence="11">
    <location>
        <position position="15"/>
    </location>
</feature>
<feature type="modified residue" description="Phosphoserine" evidence="1">
    <location>
        <position position="144"/>
    </location>
</feature>
<feature type="modified residue" description="Phosphothreonine" evidence="10">
    <location>
        <position position="340"/>
    </location>
</feature>
<feature type="splice variant" id="VSP_009640" description="In isoform 2 and isoform 3." evidence="5 7">
    <original>MGKSRTKRFKRPQFSPTGDCQAEAAAAANGTGGEEDDGPAAELLEKLQHPSAEVRECACAGLARLVQQRPALPGLARRDAVRRLGPLLLDPSLAVRETAAGALRNL</original>
    <variation>MGPEARRTTGRRRSCWKRNP</variation>
    <location>
        <begin position="1"/>
        <end position="106"/>
    </location>
</feature>
<feature type="splice variant" id="VSP_009641" description="In isoform 3." evidence="7">
    <original>DPSDDEWEELSSSDESDAFMENS</original>
    <variation>GLLTFTFRHFPPEPRGKLPWRFS</variation>
    <location>
        <begin position="378"/>
        <end position="400"/>
    </location>
</feature>
<feature type="splice variant" id="VSP_009642" description="In isoform 3." evidence="7">
    <location>
        <begin position="401"/>
        <end position="680"/>
    </location>
</feature>
<feature type="sequence variant" id="VAR_087794" description="In DBA21; uncertain significance; dbSNP:rs1184398890." evidence="3">
    <original>C</original>
    <variation>R</variation>
    <location>
        <position position="134"/>
    </location>
</feature>
<feature type="sequence variant" id="VAR_087795" description="In DBA21; uncertain significance; dbSNP:rs2150600578." evidence="3">
    <original>P</original>
    <variation>L</variation>
    <location>
        <position position="240"/>
    </location>
</feature>
<feature type="sequence variant" id="VAR_033989" description="In dbSNP:rs34703459.">
    <original>R</original>
    <variation>S</variation>
    <location>
        <position position="302"/>
    </location>
</feature>
<feature type="sequence variant" id="VAR_087796" description="In DBA21; severe decrease of protein levels in patient cells; results in impaired biogenesis of 60S ribosomal subunits; dbSNP:rs2150610519." evidence="3">
    <original>C</original>
    <variation>Y</variation>
    <location>
        <position position="446"/>
    </location>
</feature>
<feature type="sequence variant" id="VAR_087797" description="In DBA21; severe decrease of protein levels in patient cells; bone marrow patient cells show abnormal acceleration of erythrocyte maturation suggesting impaired function; affects function in RPL5 nuclear import as shown in patient cells; dbSNP:rs917466219." evidence="3">
    <original>G</original>
    <variation>E</variation>
    <location>
        <position position="584"/>
    </location>
</feature>
<feature type="sequence conflict" description="In Ref. 1; AAP97710." evidence="8" ref="1">
    <original>F</original>
    <variation>L</variation>
    <location>
        <position position="197"/>
    </location>
</feature>
<feature type="sequence conflict" description="In Ref. 1; AAP97710." evidence="8" ref="1">
    <original>P</original>
    <variation>L</variation>
    <location sequence="Q7Z4Q2-3">
        <position position="20"/>
    </location>
</feature>
<comment type="function">
    <text evidence="3">Plays a role in ribosome biogenesis and in nuclear import of the 60S ribosomal protein L5/large ribosomal subunit protein uL18 (RPL5) (PubMed:35213692). Required for proper erythrocyte maturation (PubMed:35213692).</text>
</comment>
<comment type="subunit">
    <text evidence="4">Component of a hexameric 5S RNP precursor complex, composed of 5S RNA, RRS1, RPF2/BXDC1, RPL5, RPL11 and HEATR3; this complex acts as a precursor for ribosome assembly.</text>
</comment>
<comment type="alternative products">
    <event type="alternative splicing"/>
    <isoform>
        <id>Q7Z4Q2-1</id>
        <name>1</name>
        <sequence type="displayed"/>
    </isoform>
    <isoform>
        <id>Q7Z4Q2-2</id>
        <name>2</name>
        <sequence type="described" ref="VSP_009640"/>
    </isoform>
    <isoform>
        <id>Q7Z4Q2-3</id>
        <name>3</name>
        <sequence type="described" ref="VSP_009640 VSP_009641 VSP_009642"/>
    </isoform>
</comment>
<comment type="disease" evidence="3">
    <disease id="DI-06526">
        <name>Diamond-Blackfan anemia 21</name>
        <acronym>DBA21</acronym>
        <description>An autosomal recessive form of Diamond-Blackfan anemia, a congenital non-regenerative hypoplastic anemia that usually presents early in infancy. Diamond-Blackfan anemia is characterized by a moderate to severe macrocytic anemia, erythroblastopenia, and an increased risk of malignancy. 30 to 40% of Diamond-Blackfan anemia patients present with short stature and congenital anomalies, the most frequent being craniofacial (Pierre-Robin syndrome and cleft palate), thumb and urogenital anomalies. DBA21 patients manifest bone marrow failure, short stature, facial and acromelic dysmorphic features, and intellectual disability.</description>
        <dbReference type="MIM" id="620072"/>
    </disease>
    <text>The disease is caused by variants affecting the gene represented in this entry.</text>
</comment>
<comment type="similarity">
    <text evidence="8">Belongs to the nuclear import and ribosome assembly adapter family.</text>
</comment>
<comment type="sequence caution" evidence="8">
    <conflict type="erroneous initiation">
        <sequence resource="EMBL-CDS" id="AAH14415"/>
    </conflict>
</comment>
<name>HEAT3_HUMAN</name>
<accession>Q7Z4Q2</accession>
<accession>A8K1N4</accession>
<accession>Q8N525</accession>
<accession>Q8WV56</accession>
<accession>Q96CC9</accession>
<accession>Q9NWN7</accession>
<evidence type="ECO:0000250" key="1">
    <source>
        <dbReference type="UniProtKB" id="Q8BQM4"/>
    </source>
</evidence>
<evidence type="ECO:0000256" key="2">
    <source>
        <dbReference type="SAM" id="MobiDB-lite"/>
    </source>
</evidence>
<evidence type="ECO:0000269" key="3">
    <source>
    </source>
</evidence>
<evidence type="ECO:0000269" key="4">
    <source>
    </source>
</evidence>
<evidence type="ECO:0000303" key="5">
    <source>
    </source>
</evidence>
<evidence type="ECO:0000303" key="6">
    <source>
    </source>
</evidence>
<evidence type="ECO:0000303" key="7">
    <source ref="1"/>
</evidence>
<evidence type="ECO:0000305" key="8"/>
<evidence type="ECO:0000305" key="9">
    <source>
    </source>
</evidence>
<evidence type="ECO:0007744" key="10">
    <source>
    </source>
</evidence>
<evidence type="ECO:0007744" key="11">
    <source>
    </source>
</evidence>
<sequence length="680" mass="74583">MGKSRTKRFKRPQFSPTGDCQAEAAAAANGTGGEEDDGPAAELLEKLQHPSAEVRECACAGLARLVQQRPALPGLARRDAVRRLGPLLLDPSLAVRETAAGALRNLSACGGFEVCDDMVTKDIMTPLVALLKECSAGLDSNEMSLQEKKDQNRNSIENIANETVNVLWNICECSSRAVSIFNKEGCLEIVLKYLSRFPTNVDLAISVAYCLQTVTEDNPELLKSFSATALNMLESALLSPVSSMESLLLKTLVAGTIWNLKDIIPCKSQAEIINALLKILSEVLGMDAGEMVIQMKEAETQRLKTAAEAEEILENTNGDDLIEDDEMEGISHKRRVRRKTFVSDLLPPTDKELRETIALLTAQQTALEIIVNMCCNEDPSDDEWEELSSSDESDAFMENSFSECGGQLFSPLCLSHEVHTALTNYLIPKKIFEKTAFPNSIAVDLCSRNPTWKPLIRKMNTIQCRALFCLQSLVSLLDVEHLGGAAALQTLAQHLSQLLFSQPDFAKHVDFLEAISSALRALLQTMASKNISQCMTPDQLMTLCKAGIHSSNVGVRVNVVSILGITGSVLAKEDGTLETLKNIGCFLLEVTTKDPSLVVAGEALDALFDVFADGKEAERASIQIKLLSALKEFQPVFKMKIRKEGRGNYSTDQLCVLDNVKMNLRRFIAYQETVEKRLTS</sequence>
<dbReference type="EMBL" id="AF462442">
    <property type="protein sequence ID" value="AAP97710.1"/>
    <property type="molecule type" value="mRNA"/>
</dbReference>
<dbReference type="EMBL" id="AK000725">
    <property type="protein sequence ID" value="BAA91342.1"/>
    <property type="molecule type" value="mRNA"/>
</dbReference>
<dbReference type="EMBL" id="AK289949">
    <property type="protein sequence ID" value="BAF82638.1"/>
    <property type="molecule type" value="mRNA"/>
</dbReference>
<dbReference type="EMBL" id="CH471092">
    <property type="protein sequence ID" value="EAW82743.1"/>
    <property type="molecule type" value="Genomic_DNA"/>
</dbReference>
<dbReference type="EMBL" id="BC014415">
    <property type="protein sequence ID" value="AAH14415.1"/>
    <property type="status" value="ALT_INIT"/>
    <property type="molecule type" value="mRNA"/>
</dbReference>
<dbReference type="EMBL" id="BC018730">
    <property type="protein sequence ID" value="AAH18730.2"/>
    <property type="molecule type" value="mRNA"/>
</dbReference>
<dbReference type="EMBL" id="BC033077">
    <property type="protein sequence ID" value="AAH33077.1"/>
    <property type="molecule type" value="mRNA"/>
</dbReference>
<dbReference type="CCDS" id="CCDS10739.1">
    <molecule id="Q7Z4Q2-1"/>
</dbReference>
<dbReference type="RefSeq" id="NP_891552.1">
    <molecule id="Q7Z4Q2-1"/>
    <property type="nucleotide sequence ID" value="NM_182922.4"/>
</dbReference>
<dbReference type="SMR" id="Q7Z4Q2"/>
<dbReference type="BioGRID" id="120357">
    <property type="interactions" value="187"/>
</dbReference>
<dbReference type="FunCoup" id="Q7Z4Q2">
    <property type="interactions" value="1145"/>
</dbReference>
<dbReference type="IntAct" id="Q7Z4Q2">
    <property type="interactions" value="160"/>
</dbReference>
<dbReference type="MINT" id="Q7Z4Q2"/>
<dbReference type="STRING" id="9606.ENSP00000299192"/>
<dbReference type="GlyGen" id="Q7Z4Q2">
    <property type="glycosylation" value="1 site, 1 O-linked glycan (1 site)"/>
</dbReference>
<dbReference type="iPTMnet" id="Q7Z4Q2"/>
<dbReference type="MetOSite" id="Q7Z4Q2"/>
<dbReference type="PhosphoSitePlus" id="Q7Z4Q2"/>
<dbReference type="SwissPalm" id="Q7Z4Q2"/>
<dbReference type="BioMuta" id="HEATR3"/>
<dbReference type="DMDM" id="45477280"/>
<dbReference type="jPOST" id="Q7Z4Q2"/>
<dbReference type="MassIVE" id="Q7Z4Q2"/>
<dbReference type="PaxDb" id="9606-ENSP00000299192"/>
<dbReference type="PeptideAtlas" id="Q7Z4Q2"/>
<dbReference type="ProteomicsDB" id="69221">
    <molecule id="Q7Z4Q2-1"/>
</dbReference>
<dbReference type="ProteomicsDB" id="69222">
    <molecule id="Q7Z4Q2-2"/>
</dbReference>
<dbReference type="ProteomicsDB" id="69223">
    <molecule id="Q7Z4Q2-3"/>
</dbReference>
<dbReference type="Pumba" id="Q7Z4Q2"/>
<dbReference type="Antibodypedia" id="49437">
    <property type="antibodies" value="63 antibodies from 11 providers"/>
</dbReference>
<dbReference type="DNASU" id="55027"/>
<dbReference type="Ensembl" id="ENST00000299192.8">
    <molecule id="Q7Z4Q2-1"/>
    <property type="protein sequence ID" value="ENSP00000299192.7"/>
    <property type="gene ID" value="ENSG00000155393.14"/>
</dbReference>
<dbReference type="GeneID" id="55027"/>
<dbReference type="KEGG" id="hsa:55027"/>
<dbReference type="MANE-Select" id="ENST00000299192.8">
    <property type="protein sequence ID" value="ENSP00000299192.7"/>
    <property type="RefSeq nucleotide sequence ID" value="NM_182922.4"/>
    <property type="RefSeq protein sequence ID" value="NP_891552.1"/>
</dbReference>
<dbReference type="UCSC" id="uc002efw.4">
    <molecule id="Q7Z4Q2-1"/>
    <property type="organism name" value="human"/>
</dbReference>
<dbReference type="AGR" id="HGNC:26087"/>
<dbReference type="CTD" id="55027"/>
<dbReference type="DisGeNET" id="55027"/>
<dbReference type="GeneCards" id="HEATR3"/>
<dbReference type="HGNC" id="HGNC:26087">
    <property type="gene designation" value="HEATR3"/>
</dbReference>
<dbReference type="HPA" id="ENSG00000155393">
    <property type="expression patterns" value="Low tissue specificity"/>
</dbReference>
<dbReference type="MalaCards" id="HEATR3"/>
<dbReference type="MIM" id="614951">
    <property type="type" value="gene"/>
</dbReference>
<dbReference type="MIM" id="620072">
    <property type="type" value="phenotype"/>
</dbReference>
<dbReference type="neXtProt" id="NX_Q7Z4Q2"/>
<dbReference type="OpenTargets" id="ENSG00000155393"/>
<dbReference type="Orphanet" id="124">
    <property type="disease" value="Diamond-Blackfan anemia"/>
</dbReference>
<dbReference type="PharmGKB" id="PA144596426"/>
<dbReference type="VEuPathDB" id="HostDB:ENSG00000155393"/>
<dbReference type="eggNOG" id="ENOG502QWR9">
    <property type="taxonomic scope" value="Eukaryota"/>
</dbReference>
<dbReference type="GeneTree" id="ENSGT00390000012529"/>
<dbReference type="HOGENOM" id="CLU_028600_0_0_1"/>
<dbReference type="InParanoid" id="Q7Z4Q2"/>
<dbReference type="OMA" id="ENELHAD"/>
<dbReference type="OrthoDB" id="288703at2759"/>
<dbReference type="PAN-GO" id="Q7Z4Q2">
    <property type="GO annotations" value="3 GO annotations based on evolutionary models"/>
</dbReference>
<dbReference type="PhylomeDB" id="Q7Z4Q2"/>
<dbReference type="TreeFam" id="TF324159"/>
<dbReference type="PathwayCommons" id="Q7Z4Q2"/>
<dbReference type="SignaLink" id="Q7Z4Q2"/>
<dbReference type="BioGRID-ORCS" id="55027">
    <property type="hits" value="203 hits in 1167 CRISPR screens"/>
</dbReference>
<dbReference type="ChiTaRS" id="HEATR3">
    <property type="organism name" value="human"/>
</dbReference>
<dbReference type="GenomeRNAi" id="55027"/>
<dbReference type="Pharos" id="Q7Z4Q2">
    <property type="development level" value="Tbio"/>
</dbReference>
<dbReference type="PRO" id="PR:Q7Z4Q2"/>
<dbReference type="Proteomes" id="UP000005640">
    <property type="component" value="Chromosome 16"/>
</dbReference>
<dbReference type="RNAct" id="Q7Z4Q2">
    <property type="molecule type" value="protein"/>
</dbReference>
<dbReference type="Bgee" id="ENSG00000155393">
    <property type="expression patterns" value="Expressed in monocyte and 171 other cell types or tissues"/>
</dbReference>
<dbReference type="GO" id="GO:0051082">
    <property type="term" value="F:unfolded protein binding"/>
    <property type="evidence" value="ECO:0000318"/>
    <property type="project" value="GO_Central"/>
</dbReference>
<dbReference type="GO" id="GO:0043249">
    <property type="term" value="P:erythrocyte maturation"/>
    <property type="evidence" value="ECO:0000315"/>
    <property type="project" value="UniProtKB"/>
</dbReference>
<dbReference type="GO" id="GO:0006606">
    <property type="term" value="P:protein import into nucleus"/>
    <property type="evidence" value="ECO:0000315"/>
    <property type="project" value="UniProtKB"/>
</dbReference>
<dbReference type="GO" id="GO:0042273">
    <property type="term" value="P:ribosomal large subunit biogenesis"/>
    <property type="evidence" value="ECO:0000315"/>
    <property type="project" value="UniProtKB"/>
</dbReference>
<dbReference type="CDD" id="cd13394">
    <property type="entry name" value="Syo1_like"/>
    <property type="match status" value="1"/>
</dbReference>
<dbReference type="FunFam" id="1.25.10.10:FF:000581">
    <property type="entry name" value="HEAT repeat-containing protein 3 isoform X2"/>
    <property type="match status" value="1"/>
</dbReference>
<dbReference type="FunFam" id="1.25.10.10:FF:000744">
    <property type="entry name" value="HEAT repeat-containing protein 3 isoform X2"/>
    <property type="match status" value="1"/>
</dbReference>
<dbReference type="Gene3D" id="1.25.10.10">
    <property type="entry name" value="Leucine-rich Repeat Variant"/>
    <property type="match status" value="1"/>
</dbReference>
<dbReference type="InterPro" id="IPR011989">
    <property type="entry name" value="ARM-like"/>
</dbReference>
<dbReference type="InterPro" id="IPR016024">
    <property type="entry name" value="ARM-type_fold"/>
</dbReference>
<dbReference type="InterPro" id="IPR052616">
    <property type="entry name" value="Nuclear_Import_Ribosome_Adapt"/>
</dbReference>
<dbReference type="PANTHER" id="PTHR13347">
    <property type="entry name" value="HEAT REPEAT-CONTAINING PROTEIN 3"/>
    <property type="match status" value="1"/>
</dbReference>
<dbReference type="PANTHER" id="PTHR13347:SF1">
    <property type="entry name" value="HEAT REPEAT-CONTAINING PROTEIN 3"/>
    <property type="match status" value="1"/>
</dbReference>
<dbReference type="Pfam" id="PF13513">
    <property type="entry name" value="HEAT_EZ"/>
    <property type="match status" value="1"/>
</dbReference>
<dbReference type="SUPFAM" id="SSF48371">
    <property type="entry name" value="ARM repeat"/>
    <property type="match status" value="1"/>
</dbReference>
<proteinExistence type="evidence at protein level"/>
<reference key="1">
    <citation type="submission" date="2001-12" db="EMBL/GenBank/DDBJ databases">
        <authorList>
            <person name="Wu Q."/>
            <person name="Guo J.H."/>
            <person name="Yu L."/>
        </authorList>
    </citation>
    <scope>NUCLEOTIDE SEQUENCE [LARGE SCALE MRNA] (ISOFORM 3)</scope>
    <source>
        <tissue>Brain</tissue>
    </source>
</reference>
<reference key="2">
    <citation type="journal article" date="2004" name="Nat. Genet.">
        <title>Complete sequencing and characterization of 21,243 full-length human cDNAs.</title>
        <authorList>
            <person name="Ota T."/>
            <person name="Suzuki Y."/>
            <person name="Nishikawa T."/>
            <person name="Otsuki T."/>
            <person name="Sugiyama T."/>
            <person name="Irie R."/>
            <person name="Wakamatsu A."/>
            <person name="Hayashi K."/>
            <person name="Sato H."/>
            <person name="Nagai K."/>
            <person name="Kimura K."/>
            <person name="Makita H."/>
            <person name="Sekine M."/>
            <person name="Obayashi M."/>
            <person name="Nishi T."/>
            <person name="Shibahara T."/>
            <person name="Tanaka T."/>
            <person name="Ishii S."/>
            <person name="Yamamoto J."/>
            <person name="Saito K."/>
            <person name="Kawai Y."/>
            <person name="Isono Y."/>
            <person name="Nakamura Y."/>
            <person name="Nagahari K."/>
            <person name="Murakami K."/>
            <person name="Yasuda T."/>
            <person name="Iwayanagi T."/>
            <person name="Wagatsuma M."/>
            <person name="Shiratori A."/>
            <person name="Sudo H."/>
            <person name="Hosoiri T."/>
            <person name="Kaku Y."/>
            <person name="Kodaira H."/>
            <person name="Kondo H."/>
            <person name="Sugawara M."/>
            <person name="Takahashi M."/>
            <person name="Kanda K."/>
            <person name="Yokoi T."/>
            <person name="Furuya T."/>
            <person name="Kikkawa E."/>
            <person name="Omura Y."/>
            <person name="Abe K."/>
            <person name="Kamihara K."/>
            <person name="Katsuta N."/>
            <person name="Sato K."/>
            <person name="Tanikawa M."/>
            <person name="Yamazaki M."/>
            <person name="Ninomiya K."/>
            <person name="Ishibashi T."/>
            <person name="Yamashita H."/>
            <person name="Murakawa K."/>
            <person name="Fujimori K."/>
            <person name="Tanai H."/>
            <person name="Kimata M."/>
            <person name="Watanabe M."/>
            <person name="Hiraoka S."/>
            <person name="Chiba Y."/>
            <person name="Ishida S."/>
            <person name="Ono Y."/>
            <person name="Takiguchi S."/>
            <person name="Watanabe S."/>
            <person name="Yosida M."/>
            <person name="Hotuta T."/>
            <person name="Kusano J."/>
            <person name="Kanehori K."/>
            <person name="Takahashi-Fujii A."/>
            <person name="Hara H."/>
            <person name="Tanase T.-O."/>
            <person name="Nomura Y."/>
            <person name="Togiya S."/>
            <person name="Komai F."/>
            <person name="Hara R."/>
            <person name="Takeuchi K."/>
            <person name="Arita M."/>
            <person name="Imose N."/>
            <person name="Musashino K."/>
            <person name="Yuuki H."/>
            <person name="Oshima A."/>
            <person name="Sasaki N."/>
            <person name="Aotsuka S."/>
            <person name="Yoshikawa Y."/>
            <person name="Matsunawa H."/>
            <person name="Ichihara T."/>
            <person name="Shiohata N."/>
            <person name="Sano S."/>
            <person name="Moriya S."/>
            <person name="Momiyama H."/>
            <person name="Satoh N."/>
            <person name="Takami S."/>
            <person name="Terashima Y."/>
            <person name="Suzuki O."/>
            <person name="Nakagawa S."/>
            <person name="Senoh A."/>
            <person name="Mizoguchi H."/>
            <person name="Goto Y."/>
            <person name="Shimizu F."/>
            <person name="Wakebe H."/>
            <person name="Hishigaki H."/>
            <person name="Watanabe T."/>
            <person name="Sugiyama A."/>
            <person name="Takemoto M."/>
            <person name="Kawakami B."/>
            <person name="Yamazaki M."/>
            <person name="Watanabe K."/>
            <person name="Kumagai A."/>
            <person name="Itakura S."/>
            <person name="Fukuzumi Y."/>
            <person name="Fujimori Y."/>
            <person name="Komiyama M."/>
            <person name="Tashiro H."/>
            <person name="Tanigami A."/>
            <person name="Fujiwara T."/>
            <person name="Ono T."/>
            <person name="Yamada K."/>
            <person name="Fujii Y."/>
            <person name="Ozaki K."/>
            <person name="Hirao M."/>
            <person name="Ohmori Y."/>
            <person name="Kawabata A."/>
            <person name="Hikiji T."/>
            <person name="Kobatake N."/>
            <person name="Inagaki H."/>
            <person name="Ikema Y."/>
            <person name="Okamoto S."/>
            <person name="Okitani R."/>
            <person name="Kawakami T."/>
            <person name="Noguchi S."/>
            <person name="Itoh T."/>
            <person name="Shigeta K."/>
            <person name="Senba T."/>
            <person name="Matsumura K."/>
            <person name="Nakajima Y."/>
            <person name="Mizuno T."/>
            <person name="Morinaga M."/>
            <person name="Sasaki M."/>
            <person name="Togashi T."/>
            <person name="Oyama M."/>
            <person name="Hata H."/>
            <person name="Watanabe M."/>
            <person name="Komatsu T."/>
            <person name="Mizushima-Sugano J."/>
            <person name="Satoh T."/>
            <person name="Shirai Y."/>
            <person name="Takahashi Y."/>
            <person name="Nakagawa K."/>
            <person name="Okumura K."/>
            <person name="Nagase T."/>
            <person name="Nomura N."/>
            <person name="Kikuchi H."/>
            <person name="Masuho Y."/>
            <person name="Yamashita R."/>
            <person name="Nakai K."/>
            <person name="Yada T."/>
            <person name="Nakamura Y."/>
            <person name="Ohara O."/>
            <person name="Isogai T."/>
            <person name="Sugano S."/>
        </authorList>
    </citation>
    <scope>NUCLEOTIDE SEQUENCE [LARGE SCALE MRNA] (ISOFORMS 1 AND 2)</scope>
    <source>
        <tissue>Hepatoma</tissue>
        <tissue>Hippocampus</tissue>
    </source>
</reference>
<reference key="3">
    <citation type="submission" date="2005-07" db="EMBL/GenBank/DDBJ databases">
        <authorList>
            <person name="Mural R.J."/>
            <person name="Istrail S."/>
            <person name="Sutton G.G."/>
            <person name="Florea L."/>
            <person name="Halpern A.L."/>
            <person name="Mobarry C.M."/>
            <person name="Lippert R."/>
            <person name="Walenz B."/>
            <person name="Shatkay H."/>
            <person name="Dew I."/>
            <person name="Miller J.R."/>
            <person name="Flanigan M.J."/>
            <person name="Edwards N.J."/>
            <person name="Bolanos R."/>
            <person name="Fasulo D."/>
            <person name="Halldorsson B.V."/>
            <person name="Hannenhalli S."/>
            <person name="Turner R."/>
            <person name="Yooseph S."/>
            <person name="Lu F."/>
            <person name="Nusskern D.R."/>
            <person name="Shue B.C."/>
            <person name="Zheng X.H."/>
            <person name="Zhong F."/>
            <person name="Delcher A.L."/>
            <person name="Huson D.H."/>
            <person name="Kravitz S.A."/>
            <person name="Mouchard L."/>
            <person name="Reinert K."/>
            <person name="Remington K.A."/>
            <person name="Clark A.G."/>
            <person name="Waterman M.S."/>
            <person name="Eichler E.E."/>
            <person name="Adams M.D."/>
            <person name="Hunkapiller M.W."/>
            <person name="Myers E.W."/>
            <person name="Venter J.C."/>
        </authorList>
    </citation>
    <scope>NUCLEOTIDE SEQUENCE [LARGE SCALE GENOMIC DNA]</scope>
</reference>
<reference key="4">
    <citation type="journal article" date="2004" name="Genome Res.">
        <title>The status, quality, and expansion of the NIH full-length cDNA project: the Mammalian Gene Collection (MGC).</title>
        <authorList>
            <consortium name="The MGC Project Team"/>
        </authorList>
    </citation>
    <scope>NUCLEOTIDE SEQUENCE [LARGE SCALE MRNA] (ISOFORM 1)</scope>
    <source>
        <tissue>Pancreas</tissue>
        <tissue>Skin</tissue>
        <tissue>Uterus</tissue>
    </source>
</reference>
<reference key="5">
    <citation type="journal article" date="2011" name="BMC Syst. Biol.">
        <title>Initial characterization of the human central proteome.</title>
        <authorList>
            <person name="Burkard T.R."/>
            <person name="Planyavsky M."/>
            <person name="Kaupe I."/>
            <person name="Breitwieser F.P."/>
            <person name="Buerckstuemmer T."/>
            <person name="Bennett K.L."/>
            <person name="Superti-Furga G."/>
            <person name="Colinge J."/>
        </authorList>
    </citation>
    <scope>IDENTIFICATION BY MASS SPECTROMETRY [LARGE SCALE ANALYSIS]</scope>
</reference>
<reference key="6">
    <citation type="journal article" date="2013" name="J. Proteome Res.">
        <title>Toward a comprehensive characterization of a human cancer cell phosphoproteome.</title>
        <authorList>
            <person name="Zhou H."/>
            <person name="Di Palma S."/>
            <person name="Preisinger C."/>
            <person name="Peng M."/>
            <person name="Polat A.N."/>
            <person name="Heck A.J."/>
            <person name="Mohammed S."/>
        </authorList>
    </citation>
    <scope>PHOSPHORYLATION [LARGE SCALE ANALYSIS] AT THR-340</scope>
    <scope>IDENTIFICATION BY MASS SPECTROMETRY [LARGE SCALE ANALYSIS]</scope>
    <source>
        <tissue>Cervix carcinoma</tissue>
        <tissue>Erythroleukemia</tissue>
    </source>
</reference>
<reference key="7">
    <citation type="journal article" date="2014" name="J. Proteomics">
        <title>An enzyme assisted RP-RPLC approach for in-depth analysis of human liver phosphoproteome.</title>
        <authorList>
            <person name="Bian Y."/>
            <person name="Song C."/>
            <person name="Cheng K."/>
            <person name="Dong M."/>
            <person name="Wang F."/>
            <person name="Huang J."/>
            <person name="Sun D."/>
            <person name="Wang L."/>
            <person name="Ye M."/>
            <person name="Zou H."/>
        </authorList>
    </citation>
    <scope>PHOSPHORYLATION [LARGE SCALE ANALYSIS] AT SER-15</scope>
    <scope>IDENTIFICATION BY MASS SPECTROMETRY [LARGE SCALE ANALYSIS]</scope>
    <source>
        <tissue>Liver</tissue>
    </source>
</reference>
<reference key="8">
    <citation type="journal article" date="2023" name="Nat. Struct. Mol. Biol.">
        <title>Structure of nascent 5S RNPs at the crossroad between ribosome assembly and MDM2-p53 pathways.</title>
        <authorList>
            <person name="Castillo Duque de Estrada N.M."/>
            <person name="Thoms M."/>
            <person name="Flemming D."/>
            <person name="Hammaren H.M."/>
            <person name="Buschauer R."/>
            <person name="Ameismeier M."/>
            <person name="Bassler J."/>
            <person name="Beck M."/>
            <person name="Beckmann R."/>
            <person name="Hurt E."/>
        </authorList>
    </citation>
    <scope>SUBUNIT</scope>
</reference>
<reference key="9">
    <citation type="journal article" date="2022" name="Blood">
        <title>HEATR3 variants impair nuclear import of uL18 (RPL5) and drive Diamond-Blackfan anemia.</title>
        <authorList>
            <person name="O'Donohue M.F."/>
            <person name="Da Costa L."/>
            <person name="Lezzerini M."/>
            <person name="Unal S."/>
            <person name="Joret C."/>
            <person name="Bartels M."/>
            <person name="Brilstra E."/>
            <person name="Scheijde-Vermeulen M."/>
            <person name="Wacheul L."/>
            <person name="De Keersmaecker K."/>
            <person name="Vereecke S."/>
            <person name="Labarque V."/>
            <person name="Saby M."/>
            <person name="Lefevre S.D."/>
            <person name="Platon J."/>
            <person name="Montel-Lehry N."/>
            <person name="Laugero N."/>
            <person name="Lacazette E."/>
            <person name="van Gassen K."/>
            <person name="Houtkooper R.H."/>
            <person name="Simsek-Kiper P.O."/>
            <person name="Leblanc T."/>
            <person name="Yarali N."/>
            <person name="Cetinkaya A."/>
            <person name="Akarsu N.A."/>
            <person name="Gleizes P.E."/>
            <person name="Lafontaine D.L.J."/>
            <person name="MacInnes A.W."/>
        </authorList>
    </citation>
    <scope>VARIANTS DBA21 ARG-134; LEU-240; TYR-446 AND GLU-584</scope>
    <scope>INVOLVEMENT IN DBA21</scope>
    <scope>CHARACTERIZATION OF VARIANTS DBA21 TYR-446 AND GLU-584</scope>
    <scope>FUNCTION</scope>
</reference>
<keyword id="KW-0025">Alternative splicing</keyword>
<keyword id="KW-1024">Diamond-Blackfan anemia</keyword>
<keyword id="KW-0225">Disease variant</keyword>
<keyword id="KW-0265">Erythrocyte maturation</keyword>
<keyword id="KW-0597">Phosphoprotein</keyword>
<keyword id="KW-1267">Proteomics identification</keyword>
<keyword id="KW-1185">Reference proteome</keyword>
<keyword id="KW-0677">Repeat</keyword>
<keyword id="KW-0690">Ribosome biogenesis</keyword>
<gene>
    <name type="primary">HEATR3</name>
</gene>
<protein>
    <recommendedName>
        <fullName>HEAT repeat-containing protein 3</fullName>
    </recommendedName>
    <alternativeName>
        <fullName evidence="9">Symportin Syo1</fullName>
        <shortName evidence="6">hsSyo1</shortName>
    </alternativeName>
</protein>